<evidence type="ECO:0000269" key="1">
    <source>
    </source>
</evidence>
<evidence type="ECO:0000303" key="2">
    <source>
    </source>
</evidence>
<evidence type="ECO:0000305" key="3"/>
<evidence type="ECO:0000305" key="4">
    <source>
    </source>
</evidence>
<protein>
    <recommendedName>
        <fullName evidence="2">L-cysteine desulfidase</fullName>
        <ecNumber evidence="1">4.4.1.28</ecNumber>
    </recommendedName>
    <alternativeName>
        <fullName>L-cysteine desulfhydrase</fullName>
    </alternativeName>
</protein>
<name>CYDE_METJA</name>
<sequence>MVSIMNKNELITEILKNEVVKALGCTEVGLIGYTVAKAKPEDLYSIKEIKLILDKGTFKNAFSVGVPNTNKFGILPAVVGGLLGREENKLEVFKDIKYDEKLEEFIENKLKIEVIDSDVYCKVIIKANKVYEAETKGSHSGKSLSDDLKNAYKSLTLKDFIDYIEDIPEEVIKIIKETIETNKNLSTPEVPEDFISLDLKDEILNHMLKKTVSAVYNRMIGINKPAMAIAGSGNMGLTATLPIIAYDEIKGHDEEKLTKSITLSALTTIYSAYHSSYISAMCGCVNRGGIGAVSGLSYYIFGFDRIEESIKSFTANLPGIVCDGGKIGCALKIASGVFAIYLSLFSKVPYTNGIVGKDFKECIENIGKIGKAMKPVDDEIIEILKNKK</sequence>
<accession>Q58431</accession>
<proteinExistence type="evidence at protein level"/>
<comment type="function">
    <text evidence="1">Catalyzes the cleavage of L-cysteine to form 2-aminoprop-2-enoate and sulfide. The former then spontaneously hydrolyzes to pyruvate and NH(3). May be responsible for the production of sulfide required for the biosynthesis of iron-sulfur centers in this archaea. Is very specific for L-cysteine, with no activity being detected with D-cysteine, L-homocysteine, 3-mercaptopropionate (cysteine without the amino group), cysteamine (cysteine without the carboxylate), or mercaptolactate (the hydroxyl analog of cysteine).</text>
</comment>
<comment type="catalytic activity">
    <reaction evidence="1">
        <text>L-cysteine + H2O = hydrogen sulfide + pyruvate + NH4(+) + H(+)</text>
        <dbReference type="Rhea" id="RHEA:24931"/>
        <dbReference type="ChEBI" id="CHEBI:15361"/>
        <dbReference type="ChEBI" id="CHEBI:15377"/>
        <dbReference type="ChEBI" id="CHEBI:15378"/>
        <dbReference type="ChEBI" id="CHEBI:28938"/>
        <dbReference type="ChEBI" id="CHEBI:29919"/>
        <dbReference type="ChEBI" id="CHEBI:35235"/>
        <dbReference type="EC" id="4.4.1.28"/>
    </reaction>
</comment>
<comment type="cofactor">
    <cofactor evidence="1">
        <name>[4Fe-4S] cluster</name>
        <dbReference type="ChEBI" id="CHEBI:49883"/>
    </cofactor>
    <text evidence="1">Binds 1 [4Fe-4S] cluster per subunit.</text>
</comment>
<comment type="biophysicochemical properties">
    <kinetics>
        <KM evidence="1">1.78 mM for L-cysteine (at 65 degrees Celsius)</KM>
        <text evidence="1">kcat is 39.6 sec(-1) (at 65 degrees Celsius).</text>
    </kinetics>
    <phDependence>
        <text evidence="1">Optimum pH is 7.6.</text>
    </phDependence>
</comment>
<comment type="subunit">
    <text evidence="1">Homotrimer.</text>
</comment>
<comment type="similarity">
    <text evidence="3">Belongs to the L-cysteine desulfidase family.</text>
</comment>
<feature type="chain" id="PRO_0000107148" description="L-cysteine desulfidase">
    <location>
        <begin position="1"/>
        <end position="388"/>
    </location>
</feature>
<feature type="active site" description="Proton acceptor" evidence="4">
    <location>
        <position position="25"/>
    </location>
</feature>
<feature type="binding site" evidence="1">
    <location>
        <position position="282"/>
    </location>
    <ligand>
        <name>[4Fe-4S] cluster</name>
        <dbReference type="ChEBI" id="CHEBI:49883"/>
    </ligand>
</feature>
<feature type="binding site" evidence="1">
    <location>
        <position position="322"/>
    </location>
    <ligand>
        <name>[4Fe-4S] cluster</name>
        <dbReference type="ChEBI" id="CHEBI:49883"/>
    </ligand>
</feature>
<feature type="binding site" evidence="1">
    <location>
        <position position="329"/>
    </location>
    <ligand>
        <name>[4Fe-4S] cluster</name>
        <dbReference type="ChEBI" id="CHEBI:49883"/>
    </ligand>
</feature>
<feature type="mutagenesis site" description="No activity." evidence="1">
    <original>C</original>
    <variation>A</variation>
    <location>
        <position position="25"/>
    </location>
</feature>
<feature type="mutagenesis site" description="Almost no effect." evidence="1">
    <original>H</original>
    <variation>N</variation>
    <location>
        <position position="139"/>
    </location>
</feature>
<feature type="mutagenesis site" description="Retains 5% of wild-type activity." evidence="1">
    <original>C</original>
    <variation>A</variation>
    <location>
        <position position="282"/>
    </location>
</feature>
<feature type="mutagenesis site" description="No activity; when associated with Ala-329." evidence="1">
    <original>C</original>
    <variation>A</variation>
    <location>
        <position position="322"/>
    </location>
</feature>
<feature type="mutagenesis site" description="Retains 10% of wild-type activity." evidence="1">
    <original>C</original>
    <variation>S</variation>
    <location>
        <position position="322"/>
    </location>
</feature>
<feature type="mutagenesis site" description="Retains 50% of wild-type activity." evidence="1">
    <original>D</original>
    <variation>N</variation>
    <location>
        <position position="323"/>
    </location>
</feature>
<feature type="mutagenesis site" description="No activity; when associated with Ala-322." evidence="1">
    <original>C</original>
    <variation>A</variation>
    <location>
        <position position="329"/>
    </location>
</feature>
<feature type="mutagenesis site" description="Retains 10% of wild-type activity." evidence="1">
    <original>C</original>
    <variation>S</variation>
    <location>
        <position position="329"/>
    </location>
</feature>
<gene>
    <name type="ordered locus">MJ1025</name>
</gene>
<reference key="1">
    <citation type="journal article" date="1996" name="Science">
        <title>Complete genome sequence of the methanogenic archaeon, Methanococcus jannaschii.</title>
        <authorList>
            <person name="Bult C.J."/>
            <person name="White O."/>
            <person name="Olsen G.J."/>
            <person name="Zhou L."/>
            <person name="Fleischmann R.D."/>
            <person name="Sutton G.G."/>
            <person name="Blake J.A."/>
            <person name="FitzGerald L.M."/>
            <person name="Clayton R.A."/>
            <person name="Gocayne J.D."/>
            <person name="Kerlavage A.R."/>
            <person name="Dougherty B.A."/>
            <person name="Tomb J.-F."/>
            <person name="Adams M.D."/>
            <person name="Reich C.I."/>
            <person name="Overbeek R."/>
            <person name="Kirkness E.F."/>
            <person name="Weinstock K.G."/>
            <person name="Merrick J.M."/>
            <person name="Glodek A."/>
            <person name="Scott J.L."/>
            <person name="Geoghagen N.S.M."/>
            <person name="Weidman J.F."/>
            <person name="Fuhrmann J.L."/>
            <person name="Nguyen D."/>
            <person name="Utterback T.R."/>
            <person name="Kelley J.M."/>
            <person name="Peterson J.D."/>
            <person name="Sadow P.W."/>
            <person name="Hanna M.C."/>
            <person name="Cotton M.D."/>
            <person name="Roberts K.M."/>
            <person name="Hurst M.A."/>
            <person name="Kaine B.P."/>
            <person name="Borodovsky M."/>
            <person name="Klenk H.-P."/>
            <person name="Fraser C.M."/>
            <person name="Smith H.O."/>
            <person name="Woese C.R."/>
            <person name="Venter J.C."/>
        </authorList>
    </citation>
    <scope>NUCLEOTIDE SEQUENCE [LARGE SCALE GENOMIC DNA]</scope>
    <source>
        <strain>ATCC 43067 / DSM 2661 / JAL-1 / JCM 10045 / NBRC 100440</strain>
    </source>
</reference>
<reference key="2">
    <citation type="journal article" date="2005" name="Biochemistry">
        <title>L-cysteine desulfidase: an [4Fe-4S] enzyme isolated from Methanocaldococcus jannaschii that catalyzes the breakdown of L-cysteine into pyruvate, ammonia, and sulfide.</title>
        <authorList>
            <person name="Tchong S.I."/>
            <person name="Xu H."/>
            <person name="White R.H."/>
        </authorList>
    </citation>
    <scope>FUNCTION</scope>
    <scope>CATALYTIC ACTIVITY</scope>
    <scope>SUBUNIT</scope>
    <scope>BIOPHYSICOCHEMICAL PROPERTIES</scope>
    <scope>SUBSTRATE SPECIFICITY</scope>
    <scope>COFACTOR</scope>
    <scope>MUTAGENESIS OF CYS-25; HIS-139; CYS-282; CYS-322; ASP-323 AND CYS-329</scope>
    <scope>REACTION MECHANISM</scope>
</reference>
<keyword id="KW-0004">4Fe-4S</keyword>
<keyword id="KW-0408">Iron</keyword>
<keyword id="KW-0411">Iron-sulfur</keyword>
<keyword id="KW-0456">Lyase</keyword>
<keyword id="KW-0479">Metal-binding</keyword>
<keyword id="KW-1185">Reference proteome</keyword>
<organism>
    <name type="scientific">Methanocaldococcus jannaschii (strain ATCC 43067 / DSM 2661 / JAL-1 / JCM 10045 / NBRC 100440)</name>
    <name type="common">Methanococcus jannaschii</name>
    <dbReference type="NCBI Taxonomy" id="243232"/>
    <lineage>
        <taxon>Archaea</taxon>
        <taxon>Methanobacteriati</taxon>
        <taxon>Methanobacteriota</taxon>
        <taxon>Methanomada group</taxon>
        <taxon>Methanococci</taxon>
        <taxon>Methanococcales</taxon>
        <taxon>Methanocaldococcaceae</taxon>
        <taxon>Methanocaldococcus</taxon>
    </lineage>
</organism>
<dbReference type="EC" id="4.4.1.28" evidence="1"/>
<dbReference type="EMBL" id="L77117">
    <property type="protein sequence ID" value="AAB99029.1"/>
    <property type="molecule type" value="Genomic_DNA"/>
</dbReference>
<dbReference type="PIR" id="H64427">
    <property type="entry name" value="H64427"/>
</dbReference>
<dbReference type="FunCoup" id="Q58431">
    <property type="interactions" value="20"/>
</dbReference>
<dbReference type="STRING" id="243232.MJ_1025"/>
<dbReference type="PaxDb" id="243232-MJ_1025"/>
<dbReference type="EnsemblBacteria" id="AAB99029">
    <property type="protein sequence ID" value="AAB99029"/>
    <property type="gene ID" value="MJ_1025"/>
</dbReference>
<dbReference type="KEGG" id="mja:MJ_1025"/>
<dbReference type="eggNOG" id="arCOG05065">
    <property type="taxonomic scope" value="Archaea"/>
</dbReference>
<dbReference type="HOGENOM" id="CLU_051840_0_0_2"/>
<dbReference type="InParanoid" id="Q58431"/>
<dbReference type="PhylomeDB" id="Q58431"/>
<dbReference type="BRENDA" id="4.4.1.28">
    <property type="organism ID" value="3260"/>
</dbReference>
<dbReference type="Proteomes" id="UP000000805">
    <property type="component" value="Chromosome"/>
</dbReference>
<dbReference type="GO" id="GO:0051539">
    <property type="term" value="F:4 iron, 4 sulfur cluster binding"/>
    <property type="evidence" value="ECO:0007669"/>
    <property type="project" value="UniProtKB-KW"/>
</dbReference>
<dbReference type="GO" id="GO:0080146">
    <property type="term" value="F:L-cysteine desulfhydrase activity"/>
    <property type="evidence" value="ECO:0000318"/>
    <property type="project" value="GO_Central"/>
</dbReference>
<dbReference type="GO" id="GO:0046872">
    <property type="term" value="F:metal ion binding"/>
    <property type="evidence" value="ECO:0007669"/>
    <property type="project" value="UniProtKB-KW"/>
</dbReference>
<dbReference type="GO" id="GO:0019450">
    <property type="term" value="P:L-cysteine catabolic process to pyruvate"/>
    <property type="evidence" value="ECO:0000318"/>
    <property type="project" value="GO_Central"/>
</dbReference>
<dbReference type="InterPro" id="IPR005130">
    <property type="entry name" value="Ser_deHydtase-like_asu"/>
</dbReference>
<dbReference type="InterPro" id="IPR021144">
    <property type="entry name" value="UPF0597"/>
</dbReference>
<dbReference type="PANTHER" id="PTHR30501">
    <property type="entry name" value="UPF0597 PROTEIN YHAM"/>
    <property type="match status" value="1"/>
</dbReference>
<dbReference type="PANTHER" id="PTHR30501:SF2">
    <property type="entry name" value="UPF0597 PROTEIN YHAM"/>
    <property type="match status" value="1"/>
</dbReference>
<dbReference type="Pfam" id="PF03313">
    <property type="entry name" value="SDH_alpha"/>
    <property type="match status" value="1"/>
</dbReference>
<dbReference type="PIRSF" id="PIRSF006054">
    <property type="entry name" value="UCP006054"/>
    <property type="match status" value="1"/>
</dbReference>